<comment type="function">
    <text evidence="1">Transporter for myo-inositol.</text>
</comment>
<comment type="catalytic activity">
    <reaction evidence="1">
        <text>myo-inositol(out) + H(+)(out) = myo-inositol(in) + H(+)(in)</text>
        <dbReference type="Rhea" id="RHEA:60364"/>
        <dbReference type="ChEBI" id="CHEBI:15378"/>
        <dbReference type="ChEBI" id="CHEBI:17268"/>
    </reaction>
</comment>
<comment type="subcellular location">
    <subcellularLocation>
        <location evidence="1">Cell membrane</location>
        <topology evidence="2">Multi-pass membrane protein</topology>
    </subcellularLocation>
</comment>
<comment type="induction">
    <text evidence="5 6">Induced during sexual reproduction (PubMed:20689743). Expressed during infection (PubMed:21398509).</text>
</comment>
<comment type="similarity">
    <text evidence="8">Belongs to the major facilitator superfamily. Sugar transporter (TC 2.A.1.1) family.</text>
</comment>
<name>ITR3_CRYNH</name>
<gene>
    <name evidence="7" type="primary">ITR3</name>
    <name evidence="9" type="ORF">CNAG_05377</name>
</gene>
<accession>J9W1D0</accession>
<organism evidence="9 10">
    <name type="scientific">Cryptococcus neoformans var. grubii serotype A (strain H99 / ATCC 208821 / CBS 10515 / FGSC 9487)</name>
    <name type="common">Filobasidiella neoformans var. grubii</name>
    <dbReference type="NCBI Taxonomy" id="235443"/>
    <lineage>
        <taxon>Eukaryota</taxon>
        <taxon>Fungi</taxon>
        <taxon>Dikarya</taxon>
        <taxon>Basidiomycota</taxon>
        <taxon>Agaricomycotina</taxon>
        <taxon>Tremellomycetes</taxon>
        <taxon>Tremellales</taxon>
        <taxon>Cryptococcaceae</taxon>
        <taxon>Cryptococcus</taxon>
        <taxon>Cryptococcus neoformans species complex</taxon>
    </lineage>
</organism>
<proteinExistence type="evidence at transcript level"/>
<sequence length="590" mass="63710">MRTTHIEDRDNNSLENKHTDHIEGVENGKGTQEPPSPSGFGGHLIDENLVHVEGEDKVTWYLCFLISASAIAGFLFGYDTGVVGVALPLVGTDLGGNELNSSQQEIITAGTTIGAIFGSAILGGWGDHLGRKMAILISDVFFTVGAVIIASSYSVPQIIVGRIVLGVGVGGAAVIAPLFITETAPTAVRGRCIGVNAFFIPFGQLVADSIGAGVQNMHGGWRLLFALGAVPSLIQLLLFHYLPESPRILIVKGDIDRARNVFQRIYPTATHEMVDYKLRVAQEYVAATTALQSGTTFWERVKKVWKTGSYRRSIIAVSVLQAAGQLCGFNTLLYYAGTLFGLLGLSNPALGGLIPAGTNAVFVLIGMSTVDKIGRRGLLLVGVPVLLLGLVWNIIGFYYMCKPTGGFLDTSYSYDTTNVGIVIGGIVFYVAGFGLTYSHLVWYQAEYLALEVRSMGSGVATTVCWIANLVVSVSYLSELETMTPSGTYGFYLGLSVIAFVFVVFCFPETKQLSIDETSLLFENDWGVKRSVQMRKERHETRKRFKDVELAEAATAHFEARQQKSASVSPAELSKFMAGLKGGKRKPQVLV</sequence>
<dbReference type="EMBL" id="CP003833">
    <property type="protein sequence ID" value="AFR98804.2"/>
    <property type="molecule type" value="Genomic_DNA"/>
</dbReference>
<dbReference type="RefSeq" id="XP_012053582.1">
    <property type="nucleotide sequence ID" value="XM_012198192.1"/>
</dbReference>
<dbReference type="SMR" id="J9W1D0"/>
<dbReference type="GeneID" id="23888696"/>
<dbReference type="KEGG" id="cng:CNAG_05377"/>
<dbReference type="VEuPathDB" id="FungiDB:CNAG_05377"/>
<dbReference type="HOGENOM" id="CLU_001265_30_5_1"/>
<dbReference type="OrthoDB" id="6461at5206"/>
<dbReference type="Proteomes" id="UP000010091">
    <property type="component" value="Chromosome 14"/>
</dbReference>
<dbReference type="GO" id="GO:0005886">
    <property type="term" value="C:plasma membrane"/>
    <property type="evidence" value="ECO:0007669"/>
    <property type="project" value="UniProtKB-SubCell"/>
</dbReference>
<dbReference type="GO" id="GO:0022857">
    <property type="term" value="F:transmembrane transporter activity"/>
    <property type="evidence" value="ECO:0007669"/>
    <property type="project" value="InterPro"/>
</dbReference>
<dbReference type="GO" id="GO:0015798">
    <property type="term" value="P:myo-inositol transport"/>
    <property type="evidence" value="ECO:0007669"/>
    <property type="project" value="UniProtKB-ARBA"/>
</dbReference>
<dbReference type="GO" id="GO:0015791">
    <property type="term" value="P:polyol transmembrane transport"/>
    <property type="evidence" value="ECO:0007669"/>
    <property type="project" value="UniProtKB-ARBA"/>
</dbReference>
<dbReference type="FunFam" id="1.20.1250.20:FF:000073">
    <property type="entry name" value="MFS myo-inositol transporter, putative"/>
    <property type="match status" value="1"/>
</dbReference>
<dbReference type="Gene3D" id="1.20.1250.20">
    <property type="entry name" value="MFS general substrate transporter like domains"/>
    <property type="match status" value="1"/>
</dbReference>
<dbReference type="InterPro" id="IPR020846">
    <property type="entry name" value="MFS_dom"/>
</dbReference>
<dbReference type="InterPro" id="IPR005828">
    <property type="entry name" value="MFS_sugar_transport-like"/>
</dbReference>
<dbReference type="InterPro" id="IPR036259">
    <property type="entry name" value="MFS_trans_sf"/>
</dbReference>
<dbReference type="InterPro" id="IPR050814">
    <property type="entry name" value="Myo-inositol_Transporter"/>
</dbReference>
<dbReference type="InterPro" id="IPR003663">
    <property type="entry name" value="Sugar/inositol_transpt"/>
</dbReference>
<dbReference type="InterPro" id="IPR005829">
    <property type="entry name" value="Sugar_transporter_CS"/>
</dbReference>
<dbReference type="NCBIfam" id="TIGR00879">
    <property type="entry name" value="SP"/>
    <property type="match status" value="1"/>
</dbReference>
<dbReference type="PANTHER" id="PTHR48020">
    <property type="entry name" value="PROTON MYO-INOSITOL COTRANSPORTER"/>
    <property type="match status" value="1"/>
</dbReference>
<dbReference type="PANTHER" id="PTHR48020:SF12">
    <property type="entry name" value="PROTON MYO-INOSITOL COTRANSPORTER"/>
    <property type="match status" value="1"/>
</dbReference>
<dbReference type="Pfam" id="PF00083">
    <property type="entry name" value="Sugar_tr"/>
    <property type="match status" value="1"/>
</dbReference>
<dbReference type="PRINTS" id="PR00171">
    <property type="entry name" value="SUGRTRNSPORT"/>
</dbReference>
<dbReference type="SUPFAM" id="SSF103473">
    <property type="entry name" value="MFS general substrate transporter"/>
    <property type="match status" value="1"/>
</dbReference>
<dbReference type="PROSITE" id="PS50850">
    <property type="entry name" value="MFS"/>
    <property type="match status" value="1"/>
</dbReference>
<dbReference type="PROSITE" id="PS00217">
    <property type="entry name" value="SUGAR_TRANSPORT_2"/>
    <property type="match status" value="1"/>
</dbReference>
<keyword id="KW-1003">Cell membrane</keyword>
<keyword id="KW-0325">Glycoprotein</keyword>
<keyword id="KW-0472">Membrane</keyword>
<keyword id="KW-0812">Transmembrane</keyword>
<keyword id="KW-1133">Transmembrane helix</keyword>
<keyword id="KW-0813">Transport</keyword>
<protein>
    <recommendedName>
        <fullName evidence="7">Myo-inositol transporter 3</fullName>
    </recommendedName>
</protein>
<feature type="chain" id="PRO_0000456781" description="Myo-inositol transporter 3">
    <location>
        <begin position="1"/>
        <end position="590"/>
    </location>
</feature>
<feature type="topological domain" description="Cytoplasmic" evidence="8">
    <location>
        <begin position="1"/>
        <end position="57"/>
    </location>
</feature>
<feature type="transmembrane region" description="Helical; Name=1" evidence="2">
    <location>
        <begin position="58"/>
        <end position="78"/>
    </location>
</feature>
<feature type="topological domain" description="Extracellular" evidence="8">
    <location>
        <begin position="79"/>
        <end position="105"/>
    </location>
</feature>
<feature type="transmembrane region" description="Helical; Name=2" evidence="2">
    <location>
        <begin position="106"/>
        <end position="126"/>
    </location>
</feature>
<feature type="topological domain" description="Cytoplasmic" evidence="8">
    <location>
        <begin position="127"/>
        <end position="132"/>
    </location>
</feature>
<feature type="transmembrane region" description="Helical; Name=3" evidence="2">
    <location>
        <begin position="133"/>
        <end position="153"/>
    </location>
</feature>
<feature type="topological domain" description="Extracellular" evidence="8">
    <location>
        <begin position="154"/>
        <end position="157"/>
    </location>
</feature>
<feature type="transmembrane region" description="Helical; Name=4" evidence="2">
    <location>
        <begin position="158"/>
        <end position="178"/>
    </location>
</feature>
<feature type="topological domain" description="Cytoplasmic" evidence="8">
    <location>
        <begin position="179"/>
        <end position="192"/>
    </location>
</feature>
<feature type="transmembrane region" description="Helical; Name=5" evidence="2">
    <location>
        <begin position="193"/>
        <end position="213"/>
    </location>
</feature>
<feature type="topological domain" description="Extracellular" evidence="8">
    <location>
        <begin position="214"/>
        <end position="222"/>
    </location>
</feature>
<feature type="transmembrane region" description="Helical; Name=6" evidence="2">
    <location>
        <begin position="223"/>
        <end position="243"/>
    </location>
</feature>
<feature type="topological domain" description="Cytoplasmic" evidence="8">
    <location>
        <begin position="244"/>
        <end position="325"/>
    </location>
</feature>
<feature type="transmembrane region" description="Helical; Name=7" evidence="2">
    <location>
        <begin position="326"/>
        <end position="346"/>
    </location>
</feature>
<feature type="topological domain" description="Extracellular" evidence="8">
    <location>
        <begin position="347"/>
        <end position="349"/>
    </location>
</feature>
<feature type="transmembrane region" description="Helical; Name=8" evidence="2">
    <location>
        <begin position="350"/>
        <end position="370"/>
    </location>
</feature>
<feature type="topological domain" description="Cytoplasmic" evidence="8">
    <location>
        <begin position="371"/>
        <end position="376"/>
    </location>
</feature>
<feature type="transmembrane region" description="Helical; Name=9" evidence="2">
    <location>
        <begin position="377"/>
        <end position="397"/>
    </location>
</feature>
<feature type="topological domain" description="Extracellular" evidence="8">
    <location>
        <begin position="398"/>
        <end position="420"/>
    </location>
</feature>
<feature type="transmembrane region" description="Helical; Name=10" evidence="2">
    <location>
        <begin position="421"/>
        <end position="441"/>
    </location>
</feature>
<feature type="topological domain" description="Cytoplasmic" evidence="8">
    <location>
        <begin position="442"/>
        <end position="455"/>
    </location>
</feature>
<feature type="transmembrane region" description="Helical; Name=11" evidence="2">
    <location>
        <begin position="456"/>
        <end position="476"/>
    </location>
</feature>
<feature type="topological domain" description="Extracellular" evidence="8">
    <location>
        <begin position="477"/>
        <end position="485"/>
    </location>
</feature>
<feature type="transmembrane region" description="Helical; Name=12" evidence="2">
    <location>
        <begin position="486"/>
        <end position="506"/>
    </location>
</feature>
<feature type="topological domain" description="Cytoplasmic" evidence="8">
    <location>
        <begin position="507"/>
        <end position="590"/>
    </location>
</feature>
<feature type="region of interest" description="Disordered" evidence="4">
    <location>
        <begin position="1"/>
        <end position="40"/>
    </location>
</feature>
<feature type="compositionally biased region" description="Basic and acidic residues" evidence="4">
    <location>
        <begin position="1"/>
        <end position="26"/>
    </location>
</feature>
<feature type="glycosylation site" description="N-linked (GlcNAc...) asparagine" evidence="3">
    <location>
        <position position="100"/>
    </location>
</feature>
<evidence type="ECO:0000250" key="1">
    <source>
        <dbReference type="UniProtKB" id="P30605"/>
    </source>
</evidence>
<evidence type="ECO:0000255" key="2"/>
<evidence type="ECO:0000255" key="3">
    <source>
        <dbReference type="PROSITE-ProRule" id="PRU00498"/>
    </source>
</evidence>
<evidence type="ECO:0000256" key="4">
    <source>
        <dbReference type="SAM" id="MobiDB-lite"/>
    </source>
</evidence>
<evidence type="ECO:0000269" key="5">
    <source>
    </source>
</evidence>
<evidence type="ECO:0000269" key="6">
    <source>
    </source>
</evidence>
<evidence type="ECO:0000303" key="7">
    <source>
    </source>
</evidence>
<evidence type="ECO:0000305" key="8"/>
<evidence type="ECO:0000312" key="9">
    <source>
        <dbReference type="EMBL" id="AFR98804.2"/>
    </source>
</evidence>
<evidence type="ECO:0000312" key="10">
    <source>
        <dbReference type="Proteomes" id="UP000010091"/>
    </source>
</evidence>
<reference evidence="10" key="1">
    <citation type="journal article" date="2014" name="PLoS Genet.">
        <title>Analysis of the genome and transcriptome of Cryptococcus neoformans var. grubii reveals complex RNA expression and microevolution leading to virulence attenuation.</title>
        <authorList>
            <person name="Janbon G."/>
            <person name="Ormerod K.L."/>
            <person name="Paulet D."/>
            <person name="Byrnes E.J. III"/>
            <person name="Yadav V."/>
            <person name="Chatterjee G."/>
            <person name="Mullapudi N."/>
            <person name="Hon C.-C."/>
            <person name="Billmyre R.B."/>
            <person name="Brunel F."/>
            <person name="Bahn Y.-S."/>
            <person name="Chen W."/>
            <person name="Chen Y."/>
            <person name="Chow E.W.L."/>
            <person name="Coppee J.-Y."/>
            <person name="Floyd-Averette A."/>
            <person name="Gaillardin C."/>
            <person name="Gerik K.J."/>
            <person name="Goldberg J."/>
            <person name="Gonzalez-Hilarion S."/>
            <person name="Gujja S."/>
            <person name="Hamlin J.L."/>
            <person name="Hsueh Y.-P."/>
            <person name="Ianiri G."/>
            <person name="Jones S."/>
            <person name="Kodira C.D."/>
            <person name="Kozubowski L."/>
            <person name="Lam W."/>
            <person name="Marra M."/>
            <person name="Mesner L.D."/>
            <person name="Mieczkowski P.A."/>
            <person name="Moyrand F."/>
            <person name="Nielsen K."/>
            <person name="Proux C."/>
            <person name="Rossignol T."/>
            <person name="Schein J.E."/>
            <person name="Sun S."/>
            <person name="Wollschlaeger C."/>
            <person name="Wood I.A."/>
            <person name="Zeng Q."/>
            <person name="Neuveglise C."/>
            <person name="Newlon C.S."/>
            <person name="Perfect J.R."/>
            <person name="Lodge J.K."/>
            <person name="Idnurm A."/>
            <person name="Stajich J.E."/>
            <person name="Kronstad J.W."/>
            <person name="Sanyal K."/>
            <person name="Heitman J."/>
            <person name="Fraser J.A."/>
            <person name="Cuomo C.A."/>
            <person name="Dietrich F.S."/>
        </authorList>
    </citation>
    <scope>NUCLEOTIDE SEQUENCE [LARGE SCALE GENOMIC DNA]</scope>
    <source>
        <strain>H99 / ATCC 208821 / CBS 10515 / FGSC 9487</strain>
    </source>
</reference>
<reference evidence="8" key="2">
    <citation type="journal article" date="2010" name="MBio">
        <title>Role of an expanded inositol transporter repertoire in Cryptococcus neoformans sexual reproduction and virulence.</title>
        <authorList>
            <person name="Xue C."/>
            <person name="Liu T."/>
            <person name="Chen L."/>
            <person name="Li W."/>
            <person name="Liu I."/>
            <person name="Kronstad J.W."/>
            <person name="Seyfang A."/>
            <person name="Heitman J."/>
        </authorList>
    </citation>
    <scope>INDUCTION</scope>
</reference>
<reference evidence="8" key="3">
    <citation type="journal article" date="2011" name="Eukaryot. Cell">
        <title>Two major inositol transporters and their role in cryptococcal virulence.</title>
        <authorList>
            <person name="Wang Y."/>
            <person name="Liu T.B."/>
            <person name="Delmas G."/>
            <person name="Park S."/>
            <person name="Perlin D."/>
            <person name="Xue C."/>
        </authorList>
    </citation>
    <scope>INDUCTION</scope>
</reference>